<keyword id="KW-0235">DNA replication</keyword>
<keyword id="KW-0238">DNA-binding</keyword>
<keyword id="KW-0239">DNA-directed DNA polymerase</keyword>
<keyword id="KW-0548">Nucleotidyltransferase</keyword>
<keyword id="KW-1185">Reference proteome</keyword>
<keyword id="KW-0808">Transferase</keyword>
<comment type="catalytic activity">
    <reaction>
        <text>DNA(n) + a 2'-deoxyribonucleoside 5'-triphosphate = DNA(n+1) + diphosphate</text>
        <dbReference type="Rhea" id="RHEA:22508"/>
        <dbReference type="Rhea" id="RHEA-COMP:17339"/>
        <dbReference type="Rhea" id="RHEA-COMP:17340"/>
        <dbReference type="ChEBI" id="CHEBI:33019"/>
        <dbReference type="ChEBI" id="CHEBI:61560"/>
        <dbReference type="ChEBI" id="CHEBI:173112"/>
        <dbReference type="EC" id="2.7.7.7"/>
    </reaction>
</comment>
<comment type="similarity">
    <text evidence="1">Belongs to the DNA polymerase type-B family.</text>
</comment>
<sequence length="803" mass="91739">MKGSDATLLSFQLLDVSYEMRGSTPVIILWGRGADGSRVVVFYGEFRPYFYVLPDGSVGLDQLAAMIRRLSRPSSPILSVERVRRRFIGREVEALKVTTLVPASVREYREAVRRLGGVRDVLEADIPFALRFIIDFNLYPMRWYVAEVREVAVPHGYSVDRAYTLSGDIREDETRIQEDPLKGLRVMAFDIEVYSKMRTPDPKKDPVIMIGLQQAGGEIEILEAEDRSDKKVIAGFVERVKSIDPDVIVGYNQNRFDWPYLVERARVLGVKLAVGRRSVEPQPGLYGHYSVSGRLNVDLLDFAEELHEVKVKTLEEVADYLGVVKIGERVTLEWWQIGEYWDDPSKREILRKYLRDDVRSTMGLAEKFLPFGAELSQVSGLPLDQVMAASVGFRLEWRLIREAAKLGELVPNRVERSEGRYAGAIVLRPKPGVHEDIAVLDFASMYPNIMVKYNVGPDTLVRPGEEYGEEEVYTAPEVGHKFRKSPPGFFKKILERFLSWRRQIRSEMKKHPPDSPEYKLLDERQKAIKLLANASYGYMGWPHARWYCRECAEAVTAWGRSIIRTAIRKAGELGLEVIYGDTDSLFVKNDPEKVERLIRFVEEELGFDIKVDKVYRRVFFTEAKKRYVGLTVDGKIDVVGFEAVRGDWSELAKETQFKVAEIVLKTGSVDEAVDYVRNIIEKLRRGQVDMRKLVIWKTLTRPPSMYEARQPHVTAALLMERAGIKVEPGAKIGYVVTKGSGPLYTRAKPYFMASKEEVDVEYYVDKQVVPAALRILQYFGVTEKRLKGGGRQSTLLDFMRRGK</sequence>
<protein>
    <recommendedName>
        <fullName>DNA polymerase 2</fullName>
        <ecNumber>2.7.7.7</ecNumber>
    </recommendedName>
    <alternativeName>
        <fullName>DNA polymerase II</fullName>
    </alternativeName>
</protein>
<name>DPOL2_AERPE</name>
<organism>
    <name type="scientific">Aeropyrum pernix (strain ATCC 700893 / DSM 11879 / JCM 9820 / NBRC 100138 / K1)</name>
    <dbReference type="NCBI Taxonomy" id="272557"/>
    <lineage>
        <taxon>Archaea</taxon>
        <taxon>Thermoproteota</taxon>
        <taxon>Thermoprotei</taxon>
        <taxon>Desulfurococcales</taxon>
        <taxon>Desulfurococcaceae</taxon>
        <taxon>Aeropyrum</taxon>
    </lineage>
</organism>
<feature type="chain" id="PRO_0000046475" description="DNA polymerase 2">
    <location>
        <begin position="1"/>
        <end position="803"/>
    </location>
</feature>
<feature type="sequence conflict" description="In Ref. 2; BAA75663." evidence="1" ref="2">
    <original>E</original>
    <variation>K</variation>
    <location>
        <position position="123"/>
    </location>
</feature>
<feature type="sequence conflict" description="In Ref. 2; BAA75663." evidence="1" ref="2">
    <original>KIGERVTLEWWQIG</original>
    <variation>R</variation>
    <location>
        <begin position="325"/>
        <end position="338"/>
    </location>
</feature>
<feature type="sequence conflict" description="In Ref. 2; BAA75663." evidence="1" ref="2">
    <original>E</original>
    <variation>Q</variation>
    <location>
        <position position="374"/>
    </location>
</feature>
<feature type="sequence conflict" description="In Ref. 2; BAA75663." evidence="1" ref="2">
    <original>LRILQY</original>
    <variation>SAHTSSN</variation>
    <location>
        <begin position="773"/>
        <end position="778"/>
    </location>
</feature>
<feature type="sequence conflict" description="In Ref. 2; BAA75663." evidence="1" ref="2">
    <original>T</original>
    <variation>I</variation>
    <location>
        <position position="782"/>
    </location>
</feature>
<dbReference type="EC" id="2.7.7.7"/>
<dbReference type="EMBL" id="BA000002">
    <property type="protein sequence ID" value="BAA81109.2"/>
    <property type="molecule type" value="Genomic_DNA"/>
</dbReference>
<dbReference type="EMBL" id="AB017501">
    <property type="protein sequence ID" value="BAA75663.1"/>
    <property type="molecule type" value="Genomic_DNA"/>
</dbReference>
<dbReference type="PIR" id="E72515">
    <property type="entry name" value="E72515"/>
</dbReference>
<dbReference type="RefSeq" id="WP_010866794.1">
    <property type="nucleotide sequence ID" value="NC_000854.2"/>
</dbReference>
<dbReference type="SMR" id="O93746"/>
<dbReference type="STRING" id="272557.APE_2098.1"/>
<dbReference type="EnsemblBacteria" id="BAA81109">
    <property type="protein sequence ID" value="BAA81109"/>
    <property type="gene ID" value="APE_2098.1"/>
</dbReference>
<dbReference type="GeneID" id="1445191"/>
<dbReference type="KEGG" id="ape:APE_2098.1"/>
<dbReference type="PATRIC" id="fig|272557.25.peg.1399"/>
<dbReference type="eggNOG" id="arCOG00328">
    <property type="taxonomic scope" value="Archaea"/>
</dbReference>
<dbReference type="BRENDA" id="2.7.7.7">
    <property type="organism ID" value="171"/>
</dbReference>
<dbReference type="Proteomes" id="UP000002518">
    <property type="component" value="Chromosome"/>
</dbReference>
<dbReference type="GO" id="GO:0003677">
    <property type="term" value="F:DNA binding"/>
    <property type="evidence" value="ECO:0007669"/>
    <property type="project" value="UniProtKB-KW"/>
</dbReference>
<dbReference type="GO" id="GO:0003887">
    <property type="term" value="F:DNA-directed DNA polymerase activity"/>
    <property type="evidence" value="ECO:0007669"/>
    <property type="project" value="UniProtKB-KW"/>
</dbReference>
<dbReference type="GO" id="GO:0000166">
    <property type="term" value="F:nucleotide binding"/>
    <property type="evidence" value="ECO:0007669"/>
    <property type="project" value="InterPro"/>
</dbReference>
<dbReference type="GO" id="GO:0006261">
    <property type="term" value="P:DNA-templated DNA replication"/>
    <property type="evidence" value="ECO:0007669"/>
    <property type="project" value="TreeGrafter"/>
</dbReference>
<dbReference type="CDD" id="cd05781">
    <property type="entry name" value="DNA_polB_B3_exo"/>
    <property type="match status" value="1"/>
</dbReference>
<dbReference type="CDD" id="cd05536">
    <property type="entry name" value="POLBc_B3"/>
    <property type="match status" value="1"/>
</dbReference>
<dbReference type="Gene3D" id="1.10.132.60">
    <property type="entry name" value="DNA polymerase family B, C-terminal domain"/>
    <property type="match status" value="1"/>
</dbReference>
<dbReference type="Gene3D" id="3.30.342.10">
    <property type="entry name" value="DNA Polymerase, chain B, domain 1"/>
    <property type="match status" value="1"/>
</dbReference>
<dbReference type="Gene3D" id="1.10.287.690">
    <property type="entry name" value="Helix hairpin bin"/>
    <property type="match status" value="1"/>
</dbReference>
<dbReference type="Gene3D" id="3.90.1600.10">
    <property type="entry name" value="Palm domain of DNA polymerase"/>
    <property type="match status" value="1"/>
</dbReference>
<dbReference type="Gene3D" id="3.30.420.10">
    <property type="entry name" value="Ribonuclease H-like superfamily/Ribonuclease H"/>
    <property type="match status" value="1"/>
</dbReference>
<dbReference type="InterPro" id="IPR006172">
    <property type="entry name" value="DNA-dir_DNA_pol_B"/>
</dbReference>
<dbReference type="InterPro" id="IPR017964">
    <property type="entry name" value="DNA-dir_DNA_pol_B_CS"/>
</dbReference>
<dbReference type="InterPro" id="IPR006133">
    <property type="entry name" value="DNA-dir_DNA_pol_B_exonuc"/>
</dbReference>
<dbReference type="InterPro" id="IPR006134">
    <property type="entry name" value="DNA-dir_DNA_pol_B_multi_dom"/>
</dbReference>
<dbReference type="InterPro" id="IPR043502">
    <property type="entry name" value="DNA/RNA_pol_sf"/>
</dbReference>
<dbReference type="InterPro" id="IPR042087">
    <property type="entry name" value="DNA_pol_B_thumb"/>
</dbReference>
<dbReference type="InterPro" id="IPR023211">
    <property type="entry name" value="DNA_pol_palm_dom_sf"/>
</dbReference>
<dbReference type="InterPro" id="IPR050240">
    <property type="entry name" value="DNA_pol_type-B"/>
</dbReference>
<dbReference type="InterPro" id="IPR012337">
    <property type="entry name" value="RNaseH-like_sf"/>
</dbReference>
<dbReference type="InterPro" id="IPR036397">
    <property type="entry name" value="RNaseH_sf"/>
</dbReference>
<dbReference type="NCBIfam" id="TIGR00592">
    <property type="entry name" value="pol2"/>
    <property type="match status" value="1"/>
</dbReference>
<dbReference type="PANTHER" id="PTHR10322">
    <property type="entry name" value="DNA POLYMERASE CATALYTIC SUBUNIT"/>
    <property type="match status" value="1"/>
</dbReference>
<dbReference type="PANTHER" id="PTHR10322:SF23">
    <property type="entry name" value="DNA POLYMERASE DELTA CATALYTIC SUBUNIT"/>
    <property type="match status" value="1"/>
</dbReference>
<dbReference type="Pfam" id="PF00136">
    <property type="entry name" value="DNA_pol_B"/>
    <property type="match status" value="1"/>
</dbReference>
<dbReference type="Pfam" id="PF03104">
    <property type="entry name" value="DNA_pol_B_exo1"/>
    <property type="match status" value="1"/>
</dbReference>
<dbReference type="PRINTS" id="PR00106">
    <property type="entry name" value="DNAPOLB"/>
</dbReference>
<dbReference type="SMART" id="SM00486">
    <property type="entry name" value="POLBc"/>
    <property type="match status" value="1"/>
</dbReference>
<dbReference type="SUPFAM" id="SSF56672">
    <property type="entry name" value="DNA/RNA polymerases"/>
    <property type="match status" value="1"/>
</dbReference>
<dbReference type="SUPFAM" id="SSF53098">
    <property type="entry name" value="Ribonuclease H-like"/>
    <property type="match status" value="1"/>
</dbReference>
<dbReference type="PROSITE" id="PS00116">
    <property type="entry name" value="DNA_POLYMERASE_B"/>
    <property type="match status" value="1"/>
</dbReference>
<accession>O93746</accession>
<gene>
    <name type="primary">polB</name>
    <name type="ordered locus">APE_2098.1</name>
</gene>
<reference key="1">
    <citation type="journal article" date="1999" name="DNA Res.">
        <title>Complete genome sequence of an aerobic hyper-thermophilic crenarchaeon, Aeropyrum pernix K1.</title>
        <authorList>
            <person name="Kawarabayasi Y."/>
            <person name="Hino Y."/>
            <person name="Horikawa H."/>
            <person name="Yamazaki S."/>
            <person name="Haikawa Y."/>
            <person name="Jin-no K."/>
            <person name="Takahashi M."/>
            <person name="Sekine M."/>
            <person name="Baba S."/>
            <person name="Ankai A."/>
            <person name="Kosugi H."/>
            <person name="Hosoyama A."/>
            <person name="Fukui S."/>
            <person name="Nagai Y."/>
            <person name="Nishijima K."/>
            <person name="Nakazawa H."/>
            <person name="Takamiya M."/>
            <person name="Masuda S."/>
            <person name="Funahashi T."/>
            <person name="Tanaka T."/>
            <person name="Kudoh Y."/>
            <person name="Yamazaki J."/>
            <person name="Kushida N."/>
            <person name="Oguchi A."/>
            <person name="Aoki K."/>
            <person name="Kubota K."/>
            <person name="Nakamura Y."/>
            <person name="Nomura N."/>
            <person name="Sako Y."/>
            <person name="Kikuchi H."/>
        </authorList>
    </citation>
    <scope>NUCLEOTIDE SEQUENCE [LARGE SCALE GENOMIC DNA]</scope>
    <source>
        <strain>ATCC 700893 / DSM 11879 / JCM 9820 / NBRC 100138 / K1</strain>
    </source>
</reference>
<reference key="2">
    <citation type="submission" date="1998-09" db="EMBL/GenBank/DDBJ databases">
        <title>Isolation of the genes encoding two alpha-like DNA polymerases from Aeropyrum pernix.</title>
        <authorList>
            <person name="Ishino Y."/>
            <person name="Cann I.K."/>
        </authorList>
    </citation>
    <scope>NUCLEOTIDE SEQUENCE [GENOMIC DNA] OF 20-803</scope>
    <source>
        <strain>ATCC 700893 / DSM 11879 / JCM 9820 / NBRC 100138 / K1</strain>
    </source>
</reference>
<proteinExistence type="inferred from homology"/>
<evidence type="ECO:0000305" key="1"/>